<geneLocation type="plastid"/>
<evidence type="ECO:0000250" key="1"/>
<evidence type="ECO:0000255" key="2">
    <source>
        <dbReference type="HAMAP-Rule" id="MF_00610"/>
    </source>
</evidence>
<evidence type="ECO:0000305" key="3"/>
<feature type="signal peptide" evidence="2">
    <location>
        <begin position="1"/>
        <end position="35"/>
    </location>
</feature>
<feature type="chain" id="PRO_0000342059" description="Cytochrome f">
    <location>
        <begin position="36"/>
        <end position="320"/>
    </location>
</feature>
<feature type="transmembrane region" description="Helical" evidence="2">
    <location>
        <begin position="286"/>
        <end position="306"/>
    </location>
</feature>
<feature type="binding site" description="axial binding residue" evidence="2">
    <location>
        <position position="36"/>
    </location>
    <ligand>
        <name>heme</name>
        <dbReference type="ChEBI" id="CHEBI:30413"/>
    </ligand>
    <ligandPart>
        <name>Fe</name>
        <dbReference type="ChEBI" id="CHEBI:18248"/>
    </ligandPart>
</feature>
<feature type="binding site" description="covalent" evidence="2">
    <location>
        <position position="56"/>
    </location>
    <ligand>
        <name>heme</name>
        <dbReference type="ChEBI" id="CHEBI:30413"/>
    </ligand>
</feature>
<feature type="binding site" description="covalent" evidence="2">
    <location>
        <position position="59"/>
    </location>
    <ligand>
        <name>heme</name>
        <dbReference type="ChEBI" id="CHEBI:30413"/>
    </ligand>
</feature>
<feature type="binding site" description="axial binding residue" evidence="2">
    <location>
        <position position="60"/>
    </location>
    <ligand>
        <name>heme</name>
        <dbReference type="ChEBI" id="CHEBI:30413"/>
    </ligand>
    <ligandPart>
        <name>Fe</name>
        <dbReference type="ChEBI" id="CHEBI:18248"/>
    </ligandPart>
</feature>
<reference key="1">
    <citation type="journal article" date="2007" name="BMC Plant Biol.">
        <title>Complete plastid genome sequences suggest strong selection for retention of photosynthetic genes in the parasitic plant genus Cuscuta.</title>
        <authorList>
            <person name="McNeal J.R."/>
            <person name="Kuehl J.V."/>
            <person name="Boore J.L."/>
            <person name="dePamphilis C.W."/>
        </authorList>
    </citation>
    <scope>NUCLEOTIDE SEQUENCE [LARGE SCALE GENOMIC DNA]</scope>
</reference>
<comment type="function">
    <text evidence="2">Component of the cytochrome b6-f complex, which mediates electron transfer between photosystem II (PSII) and photosystem I (PSI), cyclic electron flow around PSI, and state transitions.</text>
</comment>
<comment type="cofactor">
    <cofactor evidence="2">
        <name>heme</name>
        <dbReference type="ChEBI" id="CHEBI:30413"/>
    </cofactor>
    <text evidence="2">Binds 1 heme group covalently.</text>
</comment>
<comment type="subunit">
    <text evidence="1">The 4 large subunits of the cytochrome b6-f complex are cytochrome b6, subunit IV (17 kDa polypeptide, petD), cytochrome f and the Rieske protein, while the 4 small subunits are PetG, PetL, PetM and PetN. The complex functions as a dimer (By similarity).</text>
</comment>
<comment type="subcellular location">
    <subcellularLocation>
        <location evidence="1">Plastid thylakoid membrane</location>
        <topology evidence="2">Single-pass membrane protein</topology>
    </subcellularLocation>
</comment>
<comment type="similarity">
    <text evidence="2">Belongs to the cytochrome f family.</text>
</comment>
<comment type="caution">
    <text evidence="3">Only inflorescences, fruits, starved seedlings and stressed stem tips are green in this organism.</text>
</comment>
<dbReference type="EMBL" id="EU189133">
    <property type="protein sequence ID" value="ABW20571.1"/>
    <property type="molecule type" value="Genomic_DNA"/>
</dbReference>
<dbReference type="RefSeq" id="YP_001531226.1">
    <property type="nucleotide sequence ID" value="NC_009949.1"/>
</dbReference>
<dbReference type="SMR" id="A8W3J6"/>
<dbReference type="GeneID" id="5714834"/>
<dbReference type="GO" id="GO:0009535">
    <property type="term" value="C:chloroplast thylakoid membrane"/>
    <property type="evidence" value="ECO:0007669"/>
    <property type="project" value="TreeGrafter"/>
</dbReference>
<dbReference type="GO" id="GO:0009055">
    <property type="term" value="F:electron transfer activity"/>
    <property type="evidence" value="ECO:0007669"/>
    <property type="project" value="UniProtKB-UniRule"/>
</dbReference>
<dbReference type="GO" id="GO:0020037">
    <property type="term" value="F:heme binding"/>
    <property type="evidence" value="ECO:0007669"/>
    <property type="project" value="InterPro"/>
</dbReference>
<dbReference type="GO" id="GO:0005506">
    <property type="term" value="F:iron ion binding"/>
    <property type="evidence" value="ECO:0007669"/>
    <property type="project" value="InterPro"/>
</dbReference>
<dbReference type="GO" id="GO:0015979">
    <property type="term" value="P:photosynthesis"/>
    <property type="evidence" value="ECO:0007669"/>
    <property type="project" value="UniProtKB-UniRule"/>
</dbReference>
<dbReference type="FunFam" id="1.20.5.700:FF:000001">
    <property type="entry name" value="Cytochrome f"/>
    <property type="match status" value="1"/>
</dbReference>
<dbReference type="FunFam" id="2.40.50.100:FF:000007">
    <property type="entry name" value="Cytochrome f"/>
    <property type="match status" value="1"/>
</dbReference>
<dbReference type="FunFam" id="2.60.40.830:FF:000001">
    <property type="entry name" value="Cytochrome f"/>
    <property type="match status" value="1"/>
</dbReference>
<dbReference type="Gene3D" id="2.40.50.100">
    <property type="match status" value="1"/>
</dbReference>
<dbReference type="Gene3D" id="2.60.40.830">
    <property type="entry name" value="Cytochrome f large domain"/>
    <property type="match status" value="1"/>
</dbReference>
<dbReference type="Gene3D" id="1.20.5.700">
    <property type="entry name" value="Single helix bin"/>
    <property type="match status" value="1"/>
</dbReference>
<dbReference type="HAMAP" id="MF_00610">
    <property type="entry name" value="Cytb6_f_cytF"/>
    <property type="match status" value="1"/>
</dbReference>
<dbReference type="InterPro" id="IPR024058">
    <property type="entry name" value="Cyt-f_TM"/>
</dbReference>
<dbReference type="InterPro" id="IPR002325">
    <property type="entry name" value="Cyt_f"/>
</dbReference>
<dbReference type="InterPro" id="IPR024094">
    <property type="entry name" value="Cyt_f_lg_dom"/>
</dbReference>
<dbReference type="InterPro" id="IPR036826">
    <property type="entry name" value="Cyt_f_lg_dom_sf"/>
</dbReference>
<dbReference type="InterPro" id="IPR011054">
    <property type="entry name" value="Rudment_hybrid_motif"/>
</dbReference>
<dbReference type="PANTHER" id="PTHR33288">
    <property type="match status" value="1"/>
</dbReference>
<dbReference type="PANTHER" id="PTHR33288:SF10">
    <property type="entry name" value="CYTOCHROME F"/>
    <property type="match status" value="1"/>
</dbReference>
<dbReference type="Pfam" id="PF01333">
    <property type="entry name" value="Apocytochr_F_C"/>
    <property type="match status" value="1"/>
</dbReference>
<dbReference type="Pfam" id="PF16639">
    <property type="entry name" value="Apocytochr_F_N"/>
    <property type="match status" value="1"/>
</dbReference>
<dbReference type="PRINTS" id="PR00610">
    <property type="entry name" value="CYTOCHROMEF"/>
</dbReference>
<dbReference type="SUPFAM" id="SSF103431">
    <property type="entry name" value="Cytochrome f subunit of the cytochrome b6f complex, transmembrane anchor"/>
    <property type="match status" value="1"/>
</dbReference>
<dbReference type="SUPFAM" id="SSF49441">
    <property type="entry name" value="Cytochrome f, large domain"/>
    <property type="match status" value="1"/>
</dbReference>
<dbReference type="SUPFAM" id="SSF51246">
    <property type="entry name" value="Rudiment single hybrid motif"/>
    <property type="match status" value="1"/>
</dbReference>
<dbReference type="PROSITE" id="PS51010">
    <property type="entry name" value="CYTF"/>
    <property type="match status" value="1"/>
</dbReference>
<organism>
    <name type="scientific">Cuscuta obtusiflora</name>
    <name type="common">Peruvian dodder</name>
    <dbReference type="NCBI Taxonomy" id="437280"/>
    <lineage>
        <taxon>Eukaryota</taxon>
        <taxon>Viridiplantae</taxon>
        <taxon>Streptophyta</taxon>
        <taxon>Embryophyta</taxon>
        <taxon>Tracheophyta</taxon>
        <taxon>Spermatophyta</taxon>
        <taxon>Magnoliopsida</taxon>
        <taxon>eudicotyledons</taxon>
        <taxon>Gunneridae</taxon>
        <taxon>Pentapetalae</taxon>
        <taxon>asterids</taxon>
        <taxon>lamiids</taxon>
        <taxon>Solanales</taxon>
        <taxon>Convolvulaceae</taxon>
        <taxon>Cuscuteae</taxon>
        <taxon>Cuscuta</taxon>
        <taxon>Cuscuta subgen. Grammica</taxon>
        <taxon>Cuscuta sect. Cleistogrammica</taxon>
    </lineage>
</organism>
<keyword id="KW-0249">Electron transport</keyword>
<keyword id="KW-0349">Heme</keyword>
<keyword id="KW-0408">Iron</keyword>
<keyword id="KW-0472">Membrane</keyword>
<keyword id="KW-0479">Metal-binding</keyword>
<keyword id="KW-0602">Photosynthesis</keyword>
<keyword id="KW-0934">Plastid</keyword>
<keyword id="KW-0732">Signal</keyword>
<keyword id="KW-0793">Thylakoid</keyword>
<keyword id="KW-0812">Transmembrane</keyword>
<keyword id="KW-1133">Transmembrane helix</keyword>
<keyword id="KW-0813">Transport</keyword>
<protein>
    <recommendedName>
        <fullName evidence="2">Cytochrome f</fullName>
    </recommendedName>
</protein>
<accession>A8W3J6</accession>
<name>CYF_CUSOB</name>
<proteinExistence type="inferred from homology"/>
<gene>
    <name evidence="2" type="primary">petA</name>
</gene>
<sequence length="320" mass="35508">MHTKNLFYSRPQQITQYLSAFLMMVILTRTSISSAYPLFAQQGYENPREATGRIVCANCHLANKPVNIEVPQVILPDTVFEAVVQIPYDLQLKQVLSNGKKGGLNVGAVLILPEGFELAPPDRISPELKEKIGKLYFQSYRPNIKNIFVVGPVPGQKYKKITFPILSPNPATNRRAHFLKYPIYVGGNRGRGQIYPDGSKSNNTVFNATASGRVKKIIRNEKGGYEIIIKDGSDSNEVVNLLPPGLEPLVSEGDSIKLDQPLTSNPNVGGFGQDVAEVVLQDPSRVQVLLFFFASIILAQIFLVLKKKQFEKVQLTKINL</sequence>